<sequence>MCRVQGMIEEIVNRLRGKLIVSCQPVPESPFDNVASVVAYARAAEASGASGLRIEGAANVAAAAQASTLPVIGLIKRDLDDSPVRITPFLEDVAALCDAGAAIVAVDATDRRRPVPAAELIGEIKRRGRIAMADISTLAEARNALAAGADIIGTTMSGYTGEGPTPKDPDLDLVAHCSRLGSFLIAEGRYNSPQQAGEAIRAGADAVVVGSAITRPEHITGWFRDAVESAAKPSSPVLAFDIGGTKTLAALVRGREILERRVMTTPASVGSESWIGAIASLSADWQGRYQRAAIAVTGRVDGEIWSSLNPETLAIPPDYPLGRRMGAALGAPVEVINDAQAAAWGEYRFGAARGRDMVFLTISSGIGGGIVLGGRLIRGARGIAGSLGQVLVAGPSGFVRLETLASGFGIAKMALEAGHAGDARSVFSAAAAGEGWARRILLDAASQLAAAVAGLQAIVDPECIVIGGGVGMADGFLDMLREALGSHSAVMRPDIVAAELGADAGIIGVADLAATYFS</sequence>
<evidence type="ECO:0000250" key="1"/>
<evidence type="ECO:0000255" key="2"/>
<evidence type="ECO:0000305" key="3"/>
<organism>
    <name type="scientific">Brucella melitensis biotype 1 (strain ATCC 23456 / CCUG 17765 / NCTC 10094 / 16M)</name>
    <dbReference type="NCBI Taxonomy" id="224914"/>
    <lineage>
        <taxon>Bacteria</taxon>
        <taxon>Pseudomonadati</taxon>
        <taxon>Pseudomonadota</taxon>
        <taxon>Alphaproteobacteria</taxon>
        <taxon>Hyphomicrobiales</taxon>
        <taxon>Brucellaceae</taxon>
        <taxon>Brucella/Ochrobactrum group</taxon>
        <taxon>Brucella</taxon>
    </lineage>
</organism>
<accession>Q8YBP2</accession>
<keyword id="KW-0067">ATP-binding</keyword>
<keyword id="KW-0119">Carbohydrate metabolism</keyword>
<keyword id="KW-0413">Isomerase</keyword>
<keyword id="KW-0418">Kinase</keyword>
<keyword id="KW-0511">Multifunctional enzyme</keyword>
<keyword id="KW-0547">Nucleotide-binding</keyword>
<keyword id="KW-0808">Transferase</keyword>
<comment type="function">
    <text evidence="3">Converts N-acetylmannosamine-6-phosphate (ManNAc-6-P) to N-acetylglucosamine-6-phosphate (GlcNAc-6-P).</text>
</comment>
<comment type="function">
    <text evidence="1">Catalyzes the phosphorylation of N-acetylmannosamine (ManNAc) to ManNAc-6-P.</text>
</comment>
<comment type="catalytic activity">
    <reaction>
        <text>an N-acyl-D-glucosamine 6-phosphate = an N-acyl-D-mannosamine 6-phosphate</text>
        <dbReference type="Rhea" id="RHEA:23932"/>
        <dbReference type="ChEBI" id="CHEBI:57599"/>
        <dbReference type="ChEBI" id="CHEBI:57666"/>
        <dbReference type="EC" id="5.1.3.9"/>
    </reaction>
</comment>
<comment type="catalytic activity">
    <reaction>
        <text>an N-acyl-D-mannosamine + ATP = an N-acyl-D-mannosamine 6-phosphate + ADP + H(+)</text>
        <dbReference type="Rhea" id="RHEA:23832"/>
        <dbReference type="ChEBI" id="CHEBI:15378"/>
        <dbReference type="ChEBI" id="CHEBI:16062"/>
        <dbReference type="ChEBI" id="CHEBI:30616"/>
        <dbReference type="ChEBI" id="CHEBI:57666"/>
        <dbReference type="ChEBI" id="CHEBI:456216"/>
        <dbReference type="EC" id="2.7.1.60"/>
    </reaction>
</comment>
<comment type="pathway">
    <text>Amino-sugar metabolism; N-acetylneuraminate degradation; D-fructose 6-phosphate from N-acetylneuraminate: step 2/5.</text>
</comment>
<comment type="pathway">
    <text>Amino-sugar metabolism; N-acetylneuraminate degradation; D-fructose 6-phosphate from N-acetylneuraminate: step 3/5.</text>
</comment>
<comment type="similarity">
    <text evidence="3">In the N-terminal section; belongs to the NanE family.</text>
</comment>
<comment type="similarity">
    <text evidence="3">In the C-terminal section; belongs to the ROK (NagC/XylR) family. NanK subfamily.</text>
</comment>
<dbReference type="EC" id="5.1.3.9"/>
<dbReference type="EC" id="2.7.1.60"/>
<dbReference type="EMBL" id="AE008918">
    <property type="protein sequence ID" value="AAL54099.1"/>
    <property type="molecule type" value="Genomic_DNA"/>
</dbReference>
<dbReference type="PIR" id="AH3616">
    <property type="entry name" value="AH3616"/>
</dbReference>
<dbReference type="SMR" id="Q8YBP2"/>
<dbReference type="KEGG" id="bme:BMEII0857"/>
<dbReference type="eggNOG" id="COG1940">
    <property type="taxonomic scope" value="Bacteria"/>
</dbReference>
<dbReference type="eggNOG" id="COG3010">
    <property type="taxonomic scope" value="Bacteria"/>
</dbReference>
<dbReference type="UniPathway" id="UPA00629">
    <property type="reaction ID" value="UER00681"/>
</dbReference>
<dbReference type="UniPathway" id="UPA00629">
    <property type="reaction ID" value="UER00682"/>
</dbReference>
<dbReference type="Proteomes" id="UP000000419">
    <property type="component" value="Chromosome II"/>
</dbReference>
<dbReference type="GO" id="GO:0005829">
    <property type="term" value="C:cytosol"/>
    <property type="evidence" value="ECO:0007669"/>
    <property type="project" value="TreeGrafter"/>
</dbReference>
<dbReference type="GO" id="GO:0005524">
    <property type="term" value="F:ATP binding"/>
    <property type="evidence" value="ECO:0007669"/>
    <property type="project" value="UniProtKB-KW"/>
</dbReference>
<dbReference type="GO" id="GO:0047465">
    <property type="term" value="F:N-acylglucosamine-6-phosphate 2-epimerase activity"/>
    <property type="evidence" value="ECO:0007669"/>
    <property type="project" value="UniProtKB-EC"/>
</dbReference>
<dbReference type="GO" id="GO:0009384">
    <property type="term" value="F:N-acylmannosamine kinase activity"/>
    <property type="evidence" value="ECO:0007669"/>
    <property type="project" value="UniProtKB-EC"/>
</dbReference>
<dbReference type="GO" id="GO:0006053">
    <property type="term" value="P:N-acetylmannosamine catabolic process"/>
    <property type="evidence" value="ECO:0007669"/>
    <property type="project" value="TreeGrafter"/>
</dbReference>
<dbReference type="GO" id="GO:0019262">
    <property type="term" value="P:N-acetylneuraminate catabolic process"/>
    <property type="evidence" value="ECO:0007669"/>
    <property type="project" value="UniProtKB-UniRule"/>
</dbReference>
<dbReference type="CDD" id="cd04729">
    <property type="entry name" value="NanE"/>
    <property type="match status" value="1"/>
</dbReference>
<dbReference type="FunFam" id="3.20.20.70:FF:000035">
    <property type="entry name" value="Putative N-acetylmannosamine-6-phosphate 2-epimerase"/>
    <property type="match status" value="1"/>
</dbReference>
<dbReference type="Gene3D" id="3.30.420.40">
    <property type="match status" value="2"/>
</dbReference>
<dbReference type="Gene3D" id="3.20.20.70">
    <property type="entry name" value="Aldolase class I"/>
    <property type="match status" value="1"/>
</dbReference>
<dbReference type="HAMAP" id="MF_01235">
    <property type="entry name" value="ManNAc6P_epimer"/>
    <property type="match status" value="1"/>
</dbReference>
<dbReference type="InterPro" id="IPR013785">
    <property type="entry name" value="Aldolase_TIM"/>
</dbReference>
<dbReference type="InterPro" id="IPR043129">
    <property type="entry name" value="ATPase_NBD"/>
</dbReference>
<dbReference type="InterPro" id="IPR007260">
    <property type="entry name" value="NanE"/>
</dbReference>
<dbReference type="InterPro" id="IPR011060">
    <property type="entry name" value="RibuloseP-bd_barrel"/>
</dbReference>
<dbReference type="InterPro" id="IPR000600">
    <property type="entry name" value="ROK"/>
</dbReference>
<dbReference type="NCBIfam" id="NF002231">
    <property type="entry name" value="PRK01130.1"/>
    <property type="match status" value="1"/>
</dbReference>
<dbReference type="PANTHER" id="PTHR36204">
    <property type="entry name" value="N-ACETYLMANNOSAMINE-6-PHOSPHATE 2-EPIMERASE-RELATED"/>
    <property type="match status" value="1"/>
</dbReference>
<dbReference type="PANTHER" id="PTHR36204:SF1">
    <property type="entry name" value="N-ACETYLMANNOSAMINE-6-PHOSPHATE 2-EPIMERASE-RELATED"/>
    <property type="match status" value="1"/>
</dbReference>
<dbReference type="Pfam" id="PF04131">
    <property type="entry name" value="NanE"/>
    <property type="match status" value="1"/>
</dbReference>
<dbReference type="Pfam" id="PF00480">
    <property type="entry name" value="ROK"/>
    <property type="match status" value="1"/>
</dbReference>
<dbReference type="SUPFAM" id="SSF53067">
    <property type="entry name" value="Actin-like ATPase domain"/>
    <property type="match status" value="1"/>
</dbReference>
<dbReference type="SUPFAM" id="SSF51366">
    <property type="entry name" value="Ribulose-phoshate binding barrel"/>
    <property type="match status" value="1"/>
</dbReference>
<protein>
    <recommendedName>
        <fullName>Bifunctional enzyme NanE/NanK</fullName>
    </recommendedName>
    <domain>
        <recommendedName>
            <fullName>Putative N-acetylmannosamine-6-phosphate 2-epimerase</fullName>
            <ecNumber>5.1.3.9</ecNumber>
        </recommendedName>
        <alternativeName>
            <fullName>ManNAc-6-P epimerase</fullName>
        </alternativeName>
    </domain>
    <domain>
        <recommendedName>
            <fullName>N-acetylmannosamine kinase</fullName>
            <ecNumber>2.7.1.60</ecNumber>
        </recommendedName>
        <alternativeName>
            <fullName>ManNAc kinase</fullName>
        </alternativeName>
        <alternativeName>
            <fullName>N-acetyl-D-mannosamine kinase</fullName>
        </alternativeName>
    </domain>
</protein>
<name>NANEK_BRUME</name>
<gene>
    <name type="primary">nanEK</name>
    <name type="ordered locus">BMEII0857</name>
</gene>
<proteinExistence type="inferred from homology"/>
<feature type="chain" id="PRO_0000179823" description="Bifunctional enzyme NanE/NanK">
    <location>
        <begin position="1"/>
        <end position="518"/>
    </location>
</feature>
<feature type="region of interest" description="ManNAc-6-P epimerase">
    <location>
        <begin position="1"/>
        <end position="234"/>
    </location>
</feature>
<feature type="region of interest" description="ManNAc kinase">
    <location>
        <begin position="235"/>
        <end position="518"/>
    </location>
</feature>
<feature type="binding site" evidence="2">
    <location>
        <begin position="239"/>
        <end position="246"/>
    </location>
    <ligand>
        <name>ATP</name>
        <dbReference type="ChEBI" id="CHEBI:30616"/>
    </ligand>
</feature>
<feature type="binding site" evidence="2">
    <location>
        <begin position="365"/>
        <end position="372"/>
    </location>
    <ligand>
        <name>ATP</name>
        <dbReference type="ChEBI" id="CHEBI:30616"/>
    </ligand>
</feature>
<reference key="1">
    <citation type="journal article" date="2002" name="Proc. Natl. Acad. Sci. U.S.A.">
        <title>The genome sequence of the facultative intracellular pathogen Brucella melitensis.</title>
        <authorList>
            <person name="DelVecchio V.G."/>
            <person name="Kapatral V."/>
            <person name="Redkar R.J."/>
            <person name="Patra G."/>
            <person name="Mujer C."/>
            <person name="Los T."/>
            <person name="Ivanova N."/>
            <person name="Anderson I."/>
            <person name="Bhattacharyya A."/>
            <person name="Lykidis A."/>
            <person name="Reznik G."/>
            <person name="Jablonski L."/>
            <person name="Larsen N."/>
            <person name="D'Souza M."/>
            <person name="Bernal A."/>
            <person name="Mazur M."/>
            <person name="Goltsman E."/>
            <person name="Selkov E."/>
            <person name="Elzer P.H."/>
            <person name="Hagius S."/>
            <person name="O'Callaghan D."/>
            <person name="Letesson J.-J."/>
            <person name="Haselkorn R."/>
            <person name="Kyrpides N.C."/>
            <person name="Overbeek R."/>
        </authorList>
    </citation>
    <scope>NUCLEOTIDE SEQUENCE [LARGE SCALE GENOMIC DNA]</scope>
    <source>
        <strain>ATCC 23456 / CCUG 17765 / NCTC 10094 / 16M</strain>
    </source>
</reference>